<reference key="1">
    <citation type="journal article" date="2001" name="Nat. Genet.">
        <title>An abundance of X-linked genes expressed in spermatogonia.</title>
        <authorList>
            <person name="Wang P.J."/>
            <person name="McCarrey J.R."/>
            <person name="Yang F."/>
            <person name="Page D.C."/>
        </authorList>
    </citation>
    <scope>NUCLEOTIDE SEQUENCE [MRNA]</scope>
    <source>
        <tissue>Testis</tissue>
    </source>
</reference>
<reference key="2">
    <citation type="journal article" date="2005" name="Nature">
        <title>The DNA sequence of the human X chromosome.</title>
        <authorList>
            <person name="Ross M.T."/>
            <person name="Grafham D.V."/>
            <person name="Coffey A.J."/>
            <person name="Scherer S."/>
            <person name="McLay K."/>
            <person name="Muzny D."/>
            <person name="Platzer M."/>
            <person name="Howell G.R."/>
            <person name="Burrows C."/>
            <person name="Bird C.P."/>
            <person name="Frankish A."/>
            <person name="Lovell F.L."/>
            <person name="Howe K.L."/>
            <person name="Ashurst J.L."/>
            <person name="Fulton R.S."/>
            <person name="Sudbrak R."/>
            <person name="Wen G."/>
            <person name="Jones M.C."/>
            <person name="Hurles M.E."/>
            <person name="Andrews T.D."/>
            <person name="Scott C.E."/>
            <person name="Searle S."/>
            <person name="Ramser J."/>
            <person name="Whittaker A."/>
            <person name="Deadman R."/>
            <person name="Carter N.P."/>
            <person name="Hunt S.E."/>
            <person name="Chen R."/>
            <person name="Cree A."/>
            <person name="Gunaratne P."/>
            <person name="Havlak P."/>
            <person name="Hodgson A."/>
            <person name="Metzker M.L."/>
            <person name="Richards S."/>
            <person name="Scott G."/>
            <person name="Steffen D."/>
            <person name="Sodergren E."/>
            <person name="Wheeler D.A."/>
            <person name="Worley K.C."/>
            <person name="Ainscough R."/>
            <person name="Ambrose K.D."/>
            <person name="Ansari-Lari M.A."/>
            <person name="Aradhya S."/>
            <person name="Ashwell R.I."/>
            <person name="Babbage A.K."/>
            <person name="Bagguley C.L."/>
            <person name="Ballabio A."/>
            <person name="Banerjee R."/>
            <person name="Barker G.E."/>
            <person name="Barlow K.F."/>
            <person name="Barrett I.P."/>
            <person name="Bates K.N."/>
            <person name="Beare D.M."/>
            <person name="Beasley H."/>
            <person name="Beasley O."/>
            <person name="Beck A."/>
            <person name="Bethel G."/>
            <person name="Blechschmidt K."/>
            <person name="Brady N."/>
            <person name="Bray-Allen S."/>
            <person name="Bridgeman A.M."/>
            <person name="Brown A.J."/>
            <person name="Brown M.J."/>
            <person name="Bonnin D."/>
            <person name="Bruford E.A."/>
            <person name="Buhay C."/>
            <person name="Burch P."/>
            <person name="Burford D."/>
            <person name="Burgess J."/>
            <person name="Burrill W."/>
            <person name="Burton J."/>
            <person name="Bye J.M."/>
            <person name="Carder C."/>
            <person name="Carrel L."/>
            <person name="Chako J."/>
            <person name="Chapman J.C."/>
            <person name="Chavez D."/>
            <person name="Chen E."/>
            <person name="Chen G."/>
            <person name="Chen Y."/>
            <person name="Chen Z."/>
            <person name="Chinault C."/>
            <person name="Ciccodicola A."/>
            <person name="Clark S.Y."/>
            <person name="Clarke G."/>
            <person name="Clee C.M."/>
            <person name="Clegg S."/>
            <person name="Clerc-Blankenburg K."/>
            <person name="Clifford K."/>
            <person name="Cobley V."/>
            <person name="Cole C.G."/>
            <person name="Conquer J.S."/>
            <person name="Corby N."/>
            <person name="Connor R.E."/>
            <person name="David R."/>
            <person name="Davies J."/>
            <person name="Davis C."/>
            <person name="Davis J."/>
            <person name="Delgado O."/>
            <person name="Deshazo D."/>
            <person name="Dhami P."/>
            <person name="Ding Y."/>
            <person name="Dinh H."/>
            <person name="Dodsworth S."/>
            <person name="Draper H."/>
            <person name="Dugan-Rocha S."/>
            <person name="Dunham A."/>
            <person name="Dunn M."/>
            <person name="Durbin K.J."/>
            <person name="Dutta I."/>
            <person name="Eades T."/>
            <person name="Ellwood M."/>
            <person name="Emery-Cohen A."/>
            <person name="Errington H."/>
            <person name="Evans K.L."/>
            <person name="Faulkner L."/>
            <person name="Francis F."/>
            <person name="Frankland J."/>
            <person name="Fraser A.E."/>
            <person name="Galgoczy P."/>
            <person name="Gilbert J."/>
            <person name="Gill R."/>
            <person name="Gloeckner G."/>
            <person name="Gregory S.G."/>
            <person name="Gribble S."/>
            <person name="Griffiths C."/>
            <person name="Grocock R."/>
            <person name="Gu Y."/>
            <person name="Gwilliam R."/>
            <person name="Hamilton C."/>
            <person name="Hart E.A."/>
            <person name="Hawes A."/>
            <person name="Heath P.D."/>
            <person name="Heitmann K."/>
            <person name="Hennig S."/>
            <person name="Hernandez J."/>
            <person name="Hinzmann B."/>
            <person name="Ho S."/>
            <person name="Hoffs M."/>
            <person name="Howden P.J."/>
            <person name="Huckle E.J."/>
            <person name="Hume J."/>
            <person name="Hunt P.J."/>
            <person name="Hunt A.R."/>
            <person name="Isherwood J."/>
            <person name="Jacob L."/>
            <person name="Johnson D."/>
            <person name="Jones S."/>
            <person name="de Jong P.J."/>
            <person name="Joseph S.S."/>
            <person name="Keenan S."/>
            <person name="Kelly S."/>
            <person name="Kershaw J.K."/>
            <person name="Khan Z."/>
            <person name="Kioschis P."/>
            <person name="Klages S."/>
            <person name="Knights A.J."/>
            <person name="Kosiura A."/>
            <person name="Kovar-Smith C."/>
            <person name="Laird G.K."/>
            <person name="Langford C."/>
            <person name="Lawlor S."/>
            <person name="Leversha M."/>
            <person name="Lewis L."/>
            <person name="Liu W."/>
            <person name="Lloyd C."/>
            <person name="Lloyd D.M."/>
            <person name="Loulseged H."/>
            <person name="Loveland J.E."/>
            <person name="Lovell J.D."/>
            <person name="Lozado R."/>
            <person name="Lu J."/>
            <person name="Lyne R."/>
            <person name="Ma J."/>
            <person name="Maheshwari M."/>
            <person name="Matthews L.H."/>
            <person name="McDowall J."/>
            <person name="McLaren S."/>
            <person name="McMurray A."/>
            <person name="Meidl P."/>
            <person name="Meitinger T."/>
            <person name="Milne S."/>
            <person name="Miner G."/>
            <person name="Mistry S.L."/>
            <person name="Morgan M."/>
            <person name="Morris S."/>
            <person name="Mueller I."/>
            <person name="Mullikin J.C."/>
            <person name="Nguyen N."/>
            <person name="Nordsiek G."/>
            <person name="Nyakatura G."/>
            <person name="O'dell C.N."/>
            <person name="Okwuonu G."/>
            <person name="Palmer S."/>
            <person name="Pandian R."/>
            <person name="Parker D."/>
            <person name="Parrish J."/>
            <person name="Pasternak S."/>
            <person name="Patel D."/>
            <person name="Pearce A.V."/>
            <person name="Pearson D.M."/>
            <person name="Pelan S.E."/>
            <person name="Perez L."/>
            <person name="Porter K.M."/>
            <person name="Ramsey Y."/>
            <person name="Reichwald K."/>
            <person name="Rhodes S."/>
            <person name="Ridler K.A."/>
            <person name="Schlessinger D."/>
            <person name="Schueler M.G."/>
            <person name="Sehra H.K."/>
            <person name="Shaw-Smith C."/>
            <person name="Shen H."/>
            <person name="Sheridan E.M."/>
            <person name="Shownkeen R."/>
            <person name="Skuce C.D."/>
            <person name="Smith M.L."/>
            <person name="Sotheran E.C."/>
            <person name="Steingruber H.E."/>
            <person name="Steward C.A."/>
            <person name="Storey R."/>
            <person name="Swann R.M."/>
            <person name="Swarbreck D."/>
            <person name="Tabor P.E."/>
            <person name="Taudien S."/>
            <person name="Taylor T."/>
            <person name="Teague B."/>
            <person name="Thomas K."/>
            <person name="Thorpe A."/>
            <person name="Timms K."/>
            <person name="Tracey A."/>
            <person name="Trevanion S."/>
            <person name="Tromans A.C."/>
            <person name="d'Urso M."/>
            <person name="Verduzco D."/>
            <person name="Villasana D."/>
            <person name="Waldron L."/>
            <person name="Wall M."/>
            <person name="Wang Q."/>
            <person name="Warren J."/>
            <person name="Warry G.L."/>
            <person name="Wei X."/>
            <person name="West A."/>
            <person name="Whitehead S.L."/>
            <person name="Whiteley M.N."/>
            <person name="Wilkinson J.E."/>
            <person name="Willey D.L."/>
            <person name="Williams G."/>
            <person name="Williams L."/>
            <person name="Williamson A."/>
            <person name="Williamson H."/>
            <person name="Wilming L."/>
            <person name="Woodmansey R.L."/>
            <person name="Wray P.W."/>
            <person name="Yen J."/>
            <person name="Zhang J."/>
            <person name="Zhou J."/>
            <person name="Zoghbi H."/>
            <person name="Zorilla S."/>
            <person name="Buck D."/>
            <person name="Reinhardt R."/>
            <person name="Poustka A."/>
            <person name="Rosenthal A."/>
            <person name="Lehrach H."/>
            <person name="Meindl A."/>
            <person name="Minx P.J."/>
            <person name="Hillier L.W."/>
            <person name="Willard H.F."/>
            <person name="Wilson R.K."/>
            <person name="Waterston R.H."/>
            <person name="Rice C.M."/>
            <person name="Vaudin M."/>
            <person name="Coulson A."/>
            <person name="Nelson D.L."/>
            <person name="Weinstock G."/>
            <person name="Sulston J.E."/>
            <person name="Durbin R.M."/>
            <person name="Hubbard T."/>
            <person name="Gibbs R.A."/>
            <person name="Beck S."/>
            <person name="Rogers J."/>
            <person name="Bentley D.R."/>
        </authorList>
    </citation>
    <scope>NUCLEOTIDE SEQUENCE [LARGE SCALE GENOMIC DNA]</scope>
</reference>
<reference key="3">
    <citation type="journal article" date="2004" name="Genome Res.">
        <title>The status, quality, and expansion of the NIH full-length cDNA project: the Mammalian Gene Collection (MGC).</title>
        <authorList>
            <consortium name="The MGC Project Team"/>
        </authorList>
    </citation>
    <scope>NUCLEOTIDE SEQUENCE [LARGE SCALE MRNA]</scope>
</reference>
<reference key="4">
    <citation type="journal article" date="2010" name="Mol. Cancer Res.">
        <title>The deubiquitinating enzyme USP26 is a regulator of androgen receptor signaling.</title>
        <authorList>
            <person name="Dirac A.M."/>
            <person name="Bernards R."/>
        </authorList>
    </citation>
    <scope>FUNCTION</scope>
    <scope>SUBCELLULAR LOCATION</scope>
    <scope>MUTAGENESIS OF CYS-304</scope>
</reference>
<reference key="5">
    <citation type="journal article" date="2017" name="Nat. Commun.">
        <title>USP26 functions as a negative regulator of cellular reprogramming by stabilising PRC1 complex components.</title>
        <authorList>
            <person name="Ning B."/>
            <person name="Zhao W."/>
            <person name="Qian C."/>
            <person name="Liu P."/>
            <person name="Li Q."/>
            <person name="Li W."/>
            <person name="Wang R.F."/>
        </authorList>
    </citation>
    <scope>FUNCTION</scope>
    <scope>CATALYTIC ACTIVITY</scope>
    <scope>INTERACTION WITH RING1</scope>
    <scope>MUTAGENESIS OF CYS-304</scope>
</reference>
<reference key="6">
    <citation type="journal article" date="2021" name="Cells">
        <title>Novel Mutations in X-Linked, USP26-Induced Asthenoteratozoospermia and Male Infertility.</title>
        <authorList>
            <person name="Liu C."/>
            <person name="Shen Y."/>
            <person name="Shen Q."/>
            <person name="Zhang W."/>
            <person name="Wang J."/>
            <person name="Tang S."/>
            <person name="Wu H."/>
            <person name="Tian S."/>
            <person name="Cong J."/>
            <person name="He X."/>
            <person name="Jin L."/>
            <person name="Zhang F."/>
            <person name="Jiang X."/>
            <person name="Cao Y."/>
        </authorList>
    </citation>
    <scope>INVOLVEMENT IN SPGFX6</scope>
    <scope>VARIANTS SPGFX6 SER-799 AND GLY-825</scope>
    <scope>CHARACTERIZATION OF VARIANTS SPGFX6 SER-799 AND GLY-825</scope>
    <scope>FUNCTION</scope>
    <scope>SUBCELLULAR LOCATION</scope>
    <scope>TISSUE SPECIFICITY</scope>
</reference>
<reference key="7">
    <citation type="journal article" date="2005" name="Reprod. BioMed. Online">
        <title>Novel mutations in testis-specific ubiquitin protease 26 gene may cause male infertility and hypogonadism.</title>
        <authorList>
            <person name="Paduch D.A."/>
            <person name="Mielnik A."/>
            <person name="Schlegel P.N."/>
        </authorList>
    </citation>
    <scope>VARIANTS PHE-364 AND TYR-475</scope>
</reference>
<reference key="8">
    <citation type="journal article" date="2008" name="Fertil. Steril.">
        <title>Sequence analysis of the X-linked USP26 gene in severe male factor infertility patients and fertile controls.</title>
        <authorList>
            <person name="Christensen G.L."/>
            <person name="Griffin J."/>
            <person name="Carrell D.T."/>
        </authorList>
    </citation>
    <scope>VARIANTS PHE-364 AND PHE-517</scope>
</reference>
<reference key="9">
    <citation type="journal article" date="2009" name="Hum. Reprod.">
        <title>USP26 gene variations in fertile and infertile men.</title>
        <authorList>
            <person name="Ribarski I."/>
            <person name="Lehavi O."/>
            <person name="Yogev L."/>
            <person name="Hauser R."/>
            <person name="Bar-Shira Maymon B."/>
            <person name="Botchan A."/>
            <person name="Paz G."/>
            <person name="Yavetz H."/>
            <person name="Kleiman S.E."/>
        </authorList>
    </citation>
    <scope>VARIANTS THR-123 INS; SER-165; PHE-364; TYR-475 AND ILE-579</scope>
</reference>
<organism>
    <name type="scientific">Homo sapiens</name>
    <name type="common">Human</name>
    <dbReference type="NCBI Taxonomy" id="9606"/>
    <lineage>
        <taxon>Eukaryota</taxon>
        <taxon>Metazoa</taxon>
        <taxon>Chordata</taxon>
        <taxon>Craniata</taxon>
        <taxon>Vertebrata</taxon>
        <taxon>Euteleostomi</taxon>
        <taxon>Mammalia</taxon>
        <taxon>Eutheria</taxon>
        <taxon>Euarchontoglires</taxon>
        <taxon>Primates</taxon>
        <taxon>Haplorrhini</taxon>
        <taxon>Catarrhini</taxon>
        <taxon>Hominidae</taxon>
        <taxon>Homo</taxon>
    </lineage>
</organism>
<sequence>MAALFLRGFVQIGNCKTGISKSKEAFIEAVERKKKDRLVLYFKSGKYSTFRLSDNIQNVVLKSYRGNQNHLHLTLQNNNGLFIEGLSSTDAEQLKIFLDRVHQNEVQPPVRPGKGGSVFSSTTQKEINKTSFHKVDEKSSSKSFEIAKGSGTGVLQRMPLLTSKLTLTCGELSENQHKKRKRMLSSSSEMNEEFLKENNSVEYKKSKADCSRCVSYNREKQLKLKELEENKKLECESSCIMNATGNPYLDDIGLLQALTEKMVLVFLLQQGYSDGYTKWDKLKLFFELFPEKICHGLPNLGNTCYMNAVLQSLLSIPSFADDLLNQSFPWGKIPLNALTMCLARLLFFKDTYNIEIKEMLLLNLKKAISAAAEIFHGNAQNDAHEFLAHCLDQLKDNMEKLNTIWKPKSEFGEDNFPKQVFADDPDTSGFSCPVITNFELELLHSIACKACGQVILKTELNNYLSINLPQRIKAHPSSIQSTFDLFFGAEELEYKCAKCEHKTSVGVHSFSRLPRILIVHLKRYSLNEFCALKKNDQEVIISKYLKVSSHCNEGTRPPLPLSEDGEITDFQLLKVIRKMTSGNISVSWPATKESKDILAPHIGSDKESEQKKGQTVFKGASRRQQQKYLGKNSKPNELESVYSGDRAFIEKEPLAHLMTYLEDTSLCQFHKAGGKPASSPGTPLSKVDFQTVPENPKRKKYVKTSKFVAFDRIINPTKDLYEDKNIRIPERFQKVSEQTQQCDGMRICEQAPQQALPQSFPKPGTQGHTKNLLRPTKLNLQKSNRNSLLALGSNKNPRNKDILDKIKSKAKETKRNDDKGDHTYRLISVVSHLGKTLKSGHYICDAYDFEKQIWFTYDDMRVLGIQEAQMQEDRRCTGYIFFYMHNEIFEEMLKREENAQLNSKEVEETLQKE</sequence>
<feature type="chain" id="PRO_0000080655" description="Ubiquitin carboxyl-terminal hydrolase 26">
    <location>
        <begin position="1"/>
        <end position="913"/>
    </location>
</feature>
<feature type="domain" description="USP">
    <location>
        <begin position="295"/>
        <end position="886"/>
    </location>
</feature>
<feature type="region of interest" description="Disordered" evidence="3">
    <location>
        <begin position="601"/>
        <end position="636"/>
    </location>
</feature>
<feature type="region of interest" description="Disordered" evidence="3">
    <location>
        <begin position="753"/>
        <end position="772"/>
    </location>
</feature>
<feature type="compositionally biased region" description="Basic and acidic residues" evidence="3">
    <location>
        <begin position="601"/>
        <end position="612"/>
    </location>
</feature>
<feature type="active site" description="Nucleophile" evidence="1 2">
    <location>
        <position position="304"/>
    </location>
</feature>
<feature type="active site" description="Proton acceptor" evidence="1 2">
    <location>
        <position position="841"/>
    </location>
</feature>
<feature type="sequence variant" id="VAR_063413" evidence="6">
    <original>T</original>
    <variation>TT</variation>
    <location>
        <position position="123"/>
    </location>
</feature>
<feature type="sequence variant" id="VAR_063414" description="In dbSNP:rs61741870." evidence="6">
    <original>L</original>
    <variation>S</variation>
    <location>
        <position position="165"/>
    </location>
</feature>
<feature type="sequence variant" id="VAR_063415" description="In dbSNP:rs35397110." evidence="4 5 6">
    <original>L</original>
    <variation>F</variation>
    <location>
        <position position="364"/>
    </location>
</feature>
<feature type="sequence variant" id="VAR_063416" description="In dbSNP:rs41299088." evidence="4 6">
    <original>H</original>
    <variation>Y</variation>
    <location>
        <position position="475"/>
    </location>
</feature>
<feature type="sequence variant" id="VAR_063417" description="In dbSNP:rs1323347016." evidence="5">
    <original>L</original>
    <variation>F</variation>
    <location>
        <position position="517"/>
    </location>
</feature>
<feature type="sequence variant" id="VAR_063418" description="In dbSNP:rs138385391." evidence="6">
    <original>M</original>
    <variation>I</variation>
    <location>
        <position position="579"/>
    </location>
</feature>
<feature type="sequence variant" id="VAR_088309" description="In SPGFX6; uncertain significance; decreased protein abundance in patient sperm." evidence="9">
    <original>N</original>
    <variation>S</variation>
    <location>
        <position position="799"/>
    </location>
</feature>
<feature type="sequence variant" id="VAR_088310" description="In SPGFX6; uncertain significance; decreased protein abundance in patient sperm." evidence="9">
    <original>R</original>
    <variation>G</variation>
    <location>
        <position position="825"/>
    </location>
</feature>
<feature type="mutagenesis site" description="Loss of deubiquitinase activity. Decreased regulation of androgen receptor signaling pathway." evidence="7 8">
    <original>C</original>
    <variation>S</variation>
    <location>
        <position position="304"/>
    </location>
</feature>
<proteinExistence type="evidence at protein level"/>
<protein>
    <recommendedName>
        <fullName>Ubiquitin carboxyl-terminal hydrolase 26</fullName>
        <ecNumber evidence="8">3.4.19.12</ecNumber>
    </recommendedName>
    <alternativeName>
        <fullName>Deubiquitinating enzyme 26</fullName>
    </alternativeName>
    <alternativeName>
        <fullName>Ubiquitin thioesterase 26</fullName>
    </alternativeName>
    <alternativeName>
        <fullName>Ubiquitin-specific-processing protease 26</fullName>
    </alternativeName>
</protein>
<keyword id="KW-0966">Cell projection</keyword>
<keyword id="KW-0969">Cilium</keyword>
<keyword id="KW-0963">Cytoplasm</keyword>
<keyword id="KW-0206">Cytoskeleton</keyword>
<keyword id="KW-0282">Flagellum</keyword>
<keyword id="KW-0378">Hydrolase</keyword>
<keyword id="KW-0539">Nucleus</keyword>
<keyword id="KW-0645">Protease</keyword>
<keyword id="KW-1185">Reference proteome</keyword>
<keyword id="KW-0788">Thiol protease</keyword>
<keyword id="KW-0833">Ubl conjugation pathway</keyword>
<accession>Q9BXU7</accession>
<accession>B9WRT6</accession>
<accession>Q5H9H4</accession>
<comment type="function">
    <text evidence="7 8 9">Deubiquitinase regulating several biological processes through the deubiquitination of components of these processes (PubMed:20501646, PubMed:28839133). Involved in somatic cell reprogramming through the 'Lys-48'-linked deubiquitination and stabilization of CBX4 and CBX6, two components of the polycomb-repressive complex 1 (PRC1) (PubMed:28839133). Also deubiquitinates and probably stabilizes the androgen receptor (AR), regulating the androgen receptor signaling pathway (PubMed:20501646). May play a role in spermatogenesis (PubMed:34202084).</text>
</comment>
<comment type="catalytic activity">
    <reaction evidence="8">
        <text>Thiol-dependent hydrolysis of ester, thioester, amide, peptide and isopeptide bonds formed by the C-terminal Gly of ubiquitin (a 76-residue protein attached to proteins as an intracellular targeting signal).</text>
        <dbReference type="EC" id="3.4.19.12"/>
    </reaction>
</comment>
<comment type="subunit">
    <text evidence="8">Interacts with RING1.</text>
</comment>
<comment type="interaction">
    <interactant intactId="EBI-1641713">
        <id>Q9BXU7</id>
    </interactant>
    <interactant intactId="EBI-349854">
        <id>P13569</id>
        <label>CFTR</label>
    </interactant>
    <organismsDiffer>false</organismsDiffer>
    <experiments>4</experiments>
</comment>
<comment type="subcellular location">
    <subcellularLocation>
        <location evidence="7">Nucleus</location>
    </subcellularLocation>
    <subcellularLocation>
        <location evidence="9">Cytoplasm</location>
        <location evidence="9">Cytoskeleton</location>
        <location evidence="9">Flagellum axoneme</location>
    </subcellularLocation>
</comment>
<comment type="tissue specificity">
    <text evidence="9">Expressed in testis.</text>
</comment>
<comment type="disease" evidence="9">
    <disease id="DI-06618">
        <name>Spermatogenic failure, X-linked, 6</name>
        <acronym>SPGFX6</acronym>
        <description>A male infertility disorder due to asthenoteratozoospermia and characterized by reduced progressive sperm motility and morphologic sperm abnormalities, such as thin heads and short or coiled flagella.</description>
        <dbReference type="MIM" id="301101"/>
    </disease>
    <text>The disease may be caused by variants affecting the gene represented in this entry.</text>
</comment>
<comment type="similarity">
    <text evidence="10">Belongs to the peptidase C19 family.</text>
</comment>
<name>UBP26_HUMAN</name>
<gene>
    <name evidence="11" type="primary">USP26</name>
</gene>
<evidence type="ECO:0000255" key="1">
    <source>
        <dbReference type="PROSITE-ProRule" id="PRU10092"/>
    </source>
</evidence>
<evidence type="ECO:0000255" key="2">
    <source>
        <dbReference type="PROSITE-ProRule" id="PRU10093"/>
    </source>
</evidence>
<evidence type="ECO:0000256" key="3">
    <source>
        <dbReference type="SAM" id="MobiDB-lite"/>
    </source>
</evidence>
<evidence type="ECO:0000269" key="4">
    <source>
    </source>
</evidence>
<evidence type="ECO:0000269" key="5">
    <source>
    </source>
</evidence>
<evidence type="ECO:0000269" key="6">
    <source>
    </source>
</evidence>
<evidence type="ECO:0000269" key="7">
    <source>
    </source>
</evidence>
<evidence type="ECO:0000269" key="8">
    <source>
    </source>
</evidence>
<evidence type="ECO:0000269" key="9">
    <source>
    </source>
</evidence>
<evidence type="ECO:0000305" key="10"/>
<evidence type="ECO:0000312" key="11">
    <source>
        <dbReference type="HGNC" id="HGNC:13485"/>
    </source>
</evidence>
<dbReference type="EC" id="3.4.19.12" evidence="8"/>
<dbReference type="EMBL" id="AF285593">
    <property type="protein sequence ID" value="AAK31972.1"/>
    <property type="molecule type" value="mRNA"/>
</dbReference>
<dbReference type="EMBL" id="Z81365">
    <property type="status" value="NOT_ANNOTATED_CDS"/>
    <property type="molecule type" value="Genomic_DNA"/>
</dbReference>
<dbReference type="EMBL" id="BC069073">
    <property type="protein sequence ID" value="AAH69073.1"/>
    <property type="molecule type" value="mRNA"/>
</dbReference>
<dbReference type="EMBL" id="BC101190">
    <property type="protein sequence ID" value="AAI01191.1"/>
    <property type="molecule type" value="mRNA"/>
</dbReference>
<dbReference type="EMBL" id="BC101191">
    <property type="protein sequence ID" value="AAI01192.1"/>
    <property type="molecule type" value="mRNA"/>
</dbReference>
<dbReference type="CCDS" id="CCDS14635.1"/>
<dbReference type="RefSeq" id="NP_114113.1">
    <property type="nucleotide sequence ID" value="NM_031907.3"/>
</dbReference>
<dbReference type="RefSeq" id="XP_016885381.1">
    <property type="nucleotide sequence ID" value="XM_017029892.1"/>
</dbReference>
<dbReference type="SMR" id="Q9BXU7"/>
<dbReference type="BioGRID" id="123764">
    <property type="interactions" value="21"/>
</dbReference>
<dbReference type="FunCoup" id="Q9BXU7">
    <property type="interactions" value="44"/>
</dbReference>
<dbReference type="IntAct" id="Q9BXU7">
    <property type="interactions" value="4"/>
</dbReference>
<dbReference type="MINT" id="Q9BXU7"/>
<dbReference type="STRING" id="9606.ENSP00000423390"/>
<dbReference type="MEROPS" id="C19.046"/>
<dbReference type="GlyGen" id="Q9BXU7">
    <property type="glycosylation" value="1 site, 1 O-linked glycan (1 site)"/>
</dbReference>
<dbReference type="iPTMnet" id="Q9BXU7"/>
<dbReference type="PhosphoSitePlus" id="Q9BXU7"/>
<dbReference type="BioMuta" id="USP26"/>
<dbReference type="DMDM" id="18202739"/>
<dbReference type="jPOST" id="Q9BXU7"/>
<dbReference type="MassIVE" id="Q9BXU7"/>
<dbReference type="PaxDb" id="9606-ENSP00000423390"/>
<dbReference type="PeptideAtlas" id="Q9BXU7"/>
<dbReference type="ProteomicsDB" id="79521"/>
<dbReference type="Antibodypedia" id="30257">
    <property type="antibodies" value="113 antibodies from 24 providers"/>
</dbReference>
<dbReference type="DNASU" id="83844"/>
<dbReference type="Ensembl" id="ENST00000370832.1">
    <property type="protein sequence ID" value="ENSP00000359869.1"/>
    <property type="gene ID" value="ENSG00000134588.13"/>
</dbReference>
<dbReference type="Ensembl" id="ENST00000511190.6">
    <property type="protein sequence ID" value="ENSP00000423390.1"/>
    <property type="gene ID" value="ENSG00000134588.13"/>
</dbReference>
<dbReference type="GeneID" id="83844"/>
<dbReference type="KEGG" id="hsa:83844"/>
<dbReference type="MANE-Select" id="ENST00000511190.6">
    <property type="protein sequence ID" value="ENSP00000423390.1"/>
    <property type="RefSeq nucleotide sequence ID" value="NM_031907.3"/>
    <property type="RefSeq protein sequence ID" value="NP_114113.1"/>
</dbReference>
<dbReference type="UCSC" id="uc010nrm.1">
    <property type="organism name" value="human"/>
</dbReference>
<dbReference type="AGR" id="HGNC:13485"/>
<dbReference type="CTD" id="83844"/>
<dbReference type="DisGeNET" id="83844"/>
<dbReference type="GeneCards" id="USP26"/>
<dbReference type="HGNC" id="HGNC:13485">
    <property type="gene designation" value="USP26"/>
</dbReference>
<dbReference type="HPA" id="ENSG00000134588">
    <property type="expression patterns" value="Not detected"/>
</dbReference>
<dbReference type="MalaCards" id="USP26"/>
<dbReference type="MIM" id="300309">
    <property type="type" value="gene"/>
</dbReference>
<dbReference type="MIM" id="301101">
    <property type="type" value="phenotype"/>
</dbReference>
<dbReference type="neXtProt" id="NX_Q9BXU7"/>
<dbReference type="OpenTargets" id="ENSG00000134588"/>
<dbReference type="PharmGKB" id="PA37782"/>
<dbReference type="VEuPathDB" id="HostDB:ENSG00000134588"/>
<dbReference type="eggNOG" id="KOG1868">
    <property type="taxonomic scope" value="Eukaryota"/>
</dbReference>
<dbReference type="GeneTree" id="ENSGT00940000166393"/>
<dbReference type="HOGENOM" id="CLU_012557_0_0_1"/>
<dbReference type="InParanoid" id="Q9BXU7"/>
<dbReference type="OMA" id="NHLHLTF"/>
<dbReference type="OrthoDB" id="289038at2759"/>
<dbReference type="PAN-GO" id="Q9BXU7">
    <property type="GO annotations" value="6 GO annotations based on evolutionary models"/>
</dbReference>
<dbReference type="PhylomeDB" id="Q9BXU7"/>
<dbReference type="TreeFam" id="TF323032"/>
<dbReference type="PathwayCommons" id="Q9BXU7"/>
<dbReference type="Reactome" id="R-HSA-5689880">
    <property type="pathway name" value="Ub-specific processing proteases"/>
</dbReference>
<dbReference type="SignaLink" id="Q9BXU7"/>
<dbReference type="BioGRID-ORCS" id="83844">
    <property type="hits" value="17 hits in 815 CRISPR screens"/>
</dbReference>
<dbReference type="GenomeRNAi" id="83844"/>
<dbReference type="Pharos" id="Q9BXU7">
    <property type="development level" value="Tbio"/>
</dbReference>
<dbReference type="PRO" id="PR:Q9BXU7"/>
<dbReference type="Proteomes" id="UP000005640">
    <property type="component" value="Chromosome X"/>
</dbReference>
<dbReference type="RNAct" id="Q9BXU7">
    <property type="molecule type" value="protein"/>
</dbReference>
<dbReference type="Bgee" id="ENSG00000134588">
    <property type="expression patterns" value="Expressed in male germ line stem cell (sensu Vertebrata) in testis and 60 other cell types or tissues"/>
</dbReference>
<dbReference type="GO" id="GO:0005856">
    <property type="term" value="C:cytoskeleton"/>
    <property type="evidence" value="ECO:0007669"/>
    <property type="project" value="UniProtKB-KW"/>
</dbReference>
<dbReference type="GO" id="GO:0005829">
    <property type="term" value="C:cytosol"/>
    <property type="evidence" value="ECO:0000314"/>
    <property type="project" value="HPA"/>
</dbReference>
<dbReference type="GO" id="GO:0005654">
    <property type="term" value="C:nucleoplasm"/>
    <property type="evidence" value="ECO:0000314"/>
    <property type="project" value="HPA"/>
</dbReference>
<dbReference type="GO" id="GO:0005634">
    <property type="term" value="C:nucleus"/>
    <property type="evidence" value="ECO:0000314"/>
    <property type="project" value="UniProtKB"/>
</dbReference>
<dbReference type="GO" id="GO:0036126">
    <property type="term" value="C:sperm flagellum"/>
    <property type="evidence" value="ECO:0000315"/>
    <property type="project" value="UniProtKB"/>
</dbReference>
<dbReference type="GO" id="GO:0004843">
    <property type="term" value="F:cysteine-type deubiquitinase activity"/>
    <property type="evidence" value="ECO:0000318"/>
    <property type="project" value="GO_Central"/>
</dbReference>
<dbReference type="GO" id="GO:0101005">
    <property type="term" value="F:deubiquitinase activity"/>
    <property type="evidence" value="ECO:0000314"/>
    <property type="project" value="UniProtKB"/>
</dbReference>
<dbReference type="GO" id="GO:1990380">
    <property type="term" value="F:K48-linked deubiquitinase activity"/>
    <property type="evidence" value="ECO:0000314"/>
    <property type="project" value="UniProtKB"/>
</dbReference>
<dbReference type="GO" id="GO:0000082">
    <property type="term" value="P:G1/S transition of mitotic cell cycle"/>
    <property type="evidence" value="ECO:0000318"/>
    <property type="project" value="GO_Central"/>
</dbReference>
<dbReference type="GO" id="GO:0032435">
    <property type="term" value="P:negative regulation of proteasomal ubiquitin-dependent protein catabolic process"/>
    <property type="evidence" value="ECO:0000315"/>
    <property type="project" value="UniProtKB"/>
</dbReference>
<dbReference type="GO" id="GO:0016579">
    <property type="term" value="P:protein deubiquitination"/>
    <property type="evidence" value="ECO:0007669"/>
    <property type="project" value="InterPro"/>
</dbReference>
<dbReference type="GO" id="GO:0006508">
    <property type="term" value="P:proteolysis"/>
    <property type="evidence" value="ECO:0007669"/>
    <property type="project" value="UniProtKB-KW"/>
</dbReference>
<dbReference type="GO" id="GO:0060765">
    <property type="term" value="P:regulation of androgen receptor signaling pathway"/>
    <property type="evidence" value="ECO:0000315"/>
    <property type="project" value="UniProtKB"/>
</dbReference>
<dbReference type="GO" id="GO:0031647">
    <property type="term" value="P:regulation of protein stability"/>
    <property type="evidence" value="ECO:0000318"/>
    <property type="project" value="GO_Central"/>
</dbReference>
<dbReference type="GO" id="GO:0007283">
    <property type="term" value="P:spermatogenesis"/>
    <property type="evidence" value="ECO:0000315"/>
    <property type="project" value="UniProtKB"/>
</dbReference>
<dbReference type="CDD" id="cd02257">
    <property type="entry name" value="Peptidase_C19"/>
    <property type="match status" value="2"/>
</dbReference>
<dbReference type="CDD" id="cd13312">
    <property type="entry name" value="PH_USP37_like"/>
    <property type="match status" value="1"/>
</dbReference>
<dbReference type="FunFam" id="3.90.70.10:FF:000124">
    <property type="entry name" value="ubiquitin carboxyl-terminal hydrolase 26"/>
    <property type="match status" value="1"/>
</dbReference>
<dbReference type="FunFam" id="2.30.29.180:FF:000001">
    <property type="entry name" value="Ubiquitin carboxyl-terminal hydrolase 37"/>
    <property type="match status" value="1"/>
</dbReference>
<dbReference type="Gene3D" id="3.90.70.10">
    <property type="entry name" value="Cysteine proteinases"/>
    <property type="match status" value="2"/>
</dbReference>
<dbReference type="Gene3D" id="2.30.29.180">
    <property type="entry name" value="Ubiquitin carboxyl-terminal hydrolase 26/29/37, pleckstrin homology-like domain"/>
    <property type="match status" value="1"/>
</dbReference>
<dbReference type="InterPro" id="IPR038765">
    <property type="entry name" value="Papain-like_cys_pep_sf"/>
</dbReference>
<dbReference type="InterPro" id="IPR050164">
    <property type="entry name" value="Peptidase_C19"/>
</dbReference>
<dbReference type="InterPro" id="IPR001394">
    <property type="entry name" value="Peptidase_C19_UCH"/>
</dbReference>
<dbReference type="InterPro" id="IPR032069">
    <property type="entry name" value="USP37-like_PH"/>
</dbReference>
<dbReference type="InterPro" id="IPR038093">
    <property type="entry name" value="USP37-like_PH_sf"/>
</dbReference>
<dbReference type="InterPro" id="IPR018200">
    <property type="entry name" value="USP_CS"/>
</dbReference>
<dbReference type="InterPro" id="IPR028889">
    <property type="entry name" value="USP_dom"/>
</dbReference>
<dbReference type="PANTHER" id="PTHR24006">
    <property type="entry name" value="UBIQUITIN CARBOXYL-TERMINAL HYDROLASE"/>
    <property type="match status" value="1"/>
</dbReference>
<dbReference type="PANTHER" id="PTHR24006:SF911">
    <property type="entry name" value="UBIQUITIN CARBOXYL-TERMINAL HYDROLASE 26"/>
    <property type="match status" value="1"/>
</dbReference>
<dbReference type="Pfam" id="PF00443">
    <property type="entry name" value="UCH"/>
    <property type="match status" value="1"/>
</dbReference>
<dbReference type="Pfam" id="PF16674">
    <property type="entry name" value="UCH_N"/>
    <property type="match status" value="1"/>
</dbReference>
<dbReference type="SUPFAM" id="SSF54001">
    <property type="entry name" value="Cysteine proteinases"/>
    <property type="match status" value="1"/>
</dbReference>
<dbReference type="PROSITE" id="PS00972">
    <property type="entry name" value="USP_1"/>
    <property type="match status" value="1"/>
</dbReference>
<dbReference type="PROSITE" id="PS00973">
    <property type="entry name" value="USP_2"/>
    <property type="match status" value="1"/>
</dbReference>
<dbReference type="PROSITE" id="PS50235">
    <property type="entry name" value="USP_3"/>
    <property type="match status" value="1"/>
</dbReference>